<reference key="1">
    <citation type="journal article" date="2007" name="PLoS Genet.">
        <title>Patterns and implications of gene gain and loss in the evolution of Prochlorococcus.</title>
        <authorList>
            <person name="Kettler G.C."/>
            <person name="Martiny A.C."/>
            <person name="Huang K."/>
            <person name="Zucker J."/>
            <person name="Coleman M.L."/>
            <person name="Rodrigue S."/>
            <person name="Chen F."/>
            <person name="Lapidus A."/>
            <person name="Ferriera S."/>
            <person name="Johnson J."/>
            <person name="Steglich C."/>
            <person name="Church G.M."/>
            <person name="Richardson P."/>
            <person name="Chisholm S.W."/>
        </authorList>
    </citation>
    <scope>NUCLEOTIDE SEQUENCE [LARGE SCALE GENOMIC DNA]</scope>
    <source>
        <strain>MIT 9215</strain>
    </source>
</reference>
<accession>A8G4M8</accession>
<name>GATA_PROM2</name>
<organism>
    <name type="scientific">Prochlorococcus marinus (strain MIT 9215)</name>
    <dbReference type="NCBI Taxonomy" id="93060"/>
    <lineage>
        <taxon>Bacteria</taxon>
        <taxon>Bacillati</taxon>
        <taxon>Cyanobacteriota</taxon>
        <taxon>Cyanophyceae</taxon>
        <taxon>Synechococcales</taxon>
        <taxon>Prochlorococcaceae</taxon>
        <taxon>Prochlorococcus</taxon>
    </lineage>
</organism>
<comment type="function">
    <text evidence="1">Allows the formation of correctly charged Gln-tRNA(Gln) through the transamidation of misacylated Glu-tRNA(Gln) in organisms which lack glutaminyl-tRNA synthetase. The reaction takes place in the presence of glutamine and ATP through an activated gamma-phospho-Glu-tRNA(Gln).</text>
</comment>
<comment type="catalytic activity">
    <reaction evidence="1">
        <text>L-glutamyl-tRNA(Gln) + L-glutamine + ATP + H2O = L-glutaminyl-tRNA(Gln) + L-glutamate + ADP + phosphate + H(+)</text>
        <dbReference type="Rhea" id="RHEA:17521"/>
        <dbReference type="Rhea" id="RHEA-COMP:9681"/>
        <dbReference type="Rhea" id="RHEA-COMP:9684"/>
        <dbReference type="ChEBI" id="CHEBI:15377"/>
        <dbReference type="ChEBI" id="CHEBI:15378"/>
        <dbReference type="ChEBI" id="CHEBI:29985"/>
        <dbReference type="ChEBI" id="CHEBI:30616"/>
        <dbReference type="ChEBI" id="CHEBI:43474"/>
        <dbReference type="ChEBI" id="CHEBI:58359"/>
        <dbReference type="ChEBI" id="CHEBI:78520"/>
        <dbReference type="ChEBI" id="CHEBI:78521"/>
        <dbReference type="ChEBI" id="CHEBI:456216"/>
        <dbReference type="EC" id="6.3.5.7"/>
    </reaction>
</comment>
<comment type="subunit">
    <text evidence="1">Heterotrimer of A, B and C subunits.</text>
</comment>
<comment type="similarity">
    <text evidence="1">Belongs to the amidase family. GatA subfamily.</text>
</comment>
<gene>
    <name evidence="1" type="primary">gatA</name>
    <name type="ordered locus">P9215_09441</name>
</gene>
<protein>
    <recommendedName>
        <fullName evidence="1">Glutamyl-tRNA(Gln) amidotransferase subunit A</fullName>
        <shortName evidence="1">Glu-ADT subunit A</shortName>
        <ecNumber evidence="1">6.3.5.7</ecNumber>
    </recommendedName>
</protein>
<proteinExistence type="inferred from homology"/>
<sequence length="482" mass="51888">MDFNSLRKEIINNNASVKELVNDFFDKIKHKDPEINSYICTTKDNAIEQAENIDKLIQNKEKLPPLAGIPIAIKDNICTKGVATTCASKMLKSFVPPYESTASSKLWSSGGICLGKTNLDEFAMGSSTETSLFGVTSNPWDINRVPGGSSGGSAASVAAGFCAAAIGSDTGGSIRQPASFCGVVGLKPTYGRVSRWGLVAFASSLDQIGPITNTVSDAAEILYSISGKDPFDSTCLDKPVPNYLNDLNKSINGLKIGIIKECFEHPGLNQEVKESVLSGVDRFKALGAEIIEVECPRFNDGIATYYVIAPSEASANLARYDGVKYGYRSKEGSNLVDMTSKSRAKGFGDEVQRRILIGTYALSAGYSDAYYKKAQKVRTLIRKDFDNAFKKVDVLLTPTCPTTAFLKGDYVNDPLSMYLSDLLTVPVNLAGLPAISIPCGFDTKGLPIGLQLIGNVLEEGKILNAANIFEIDAQVIKNRPLF</sequence>
<keyword id="KW-0067">ATP-binding</keyword>
<keyword id="KW-0436">Ligase</keyword>
<keyword id="KW-0547">Nucleotide-binding</keyword>
<keyword id="KW-0648">Protein biosynthesis</keyword>
<feature type="chain" id="PRO_1000057798" description="Glutamyl-tRNA(Gln) amidotransferase subunit A">
    <location>
        <begin position="1"/>
        <end position="482"/>
    </location>
</feature>
<feature type="active site" description="Charge relay system" evidence="1">
    <location>
        <position position="74"/>
    </location>
</feature>
<feature type="active site" description="Charge relay system" evidence="1">
    <location>
        <position position="149"/>
    </location>
</feature>
<feature type="active site" description="Acyl-ester intermediate" evidence="1">
    <location>
        <position position="173"/>
    </location>
</feature>
<evidence type="ECO:0000255" key="1">
    <source>
        <dbReference type="HAMAP-Rule" id="MF_00120"/>
    </source>
</evidence>
<dbReference type="EC" id="6.3.5.7" evidence="1"/>
<dbReference type="EMBL" id="CP000825">
    <property type="protein sequence ID" value="ABV50559.1"/>
    <property type="molecule type" value="Genomic_DNA"/>
</dbReference>
<dbReference type="RefSeq" id="WP_012007650.1">
    <property type="nucleotide sequence ID" value="NC_009840.1"/>
</dbReference>
<dbReference type="SMR" id="A8G4M8"/>
<dbReference type="STRING" id="93060.P9215_09441"/>
<dbReference type="KEGG" id="pmh:P9215_09441"/>
<dbReference type="eggNOG" id="COG0154">
    <property type="taxonomic scope" value="Bacteria"/>
</dbReference>
<dbReference type="HOGENOM" id="CLU_009600_0_3_3"/>
<dbReference type="OrthoDB" id="9811471at2"/>
<dbReference type="Proteomes" id="UP000002014">
    <property type="component" value="Chromosome"/>
</dbReference>
<dbReference type="GO" id="GO:0030956">
    <property type="term" value="C:glutamyl-tRNA(Gln) amidotransferase complex"/>
    <property type="evidence" value="ECO:0007669"/>
    <property type="project" value="InterPro"/>
</dbReference>
<dbReference type="GO" id="GO:0005524">
    <property type="term" value="F:ATP binding"/>
    <property type="evidence" value="ECO:0007669"/>
    <property type="project" value="UniProtKB-KW"/>
</dbReference>
<dbReference type="GO" id="GO:0050567">
    <property type="term" value="F:glutaminyl-tRNA synthase (glutamine-hydrolyzing) activity"/>
    <property type="evidence" value="ECO:0007669"/>
    <property type="project" value="UniProtKB-UniRule"/>
</dbReference>
<dbReference type="GO" id="GO:0006412">
    <property type="term" value="P:translation"/>
    <property type="evidence" value="ECO:0007669"/>
    <property type="project" value="UniProtKB-UniRule"/>
</dbReference>
<dbReference type="Gene3D" id="3.90.1300.10">
    <property type="entry name" value="Amidase signature (AS) domain"/>
    <property type="match status" value="1"/>
</dbReference>
<dbReference type="HAMAP" id="MF_00120">
    <property type="entry name" value="GatA"/>
    <property type="match status" value="1"/>
</dbReference>
<dbReference type="InterPro" id="IPR000120">
    <property type="entry name" value="Amidase"/>
</dbReference>
<dbReference type="InterPro" id="IPR020556">
    <property type="entry name" value="Amidase_CS"/>
</dbReference>
<dbReference type="InterPro" id="IPR023631">
    <property type="entry name" value="Amidase_dom"/>
</dbReference>
<dbReference type="InterPro" id="IPR036928">
    <property type="entry name" value="AS_sf"/>
</dbReference>
<dbReference type="InterPro" id="IPR004412">
    <property type="entry name" value="GatA"/>
</dbReference>
<dbReference type="NCBIfam" id="TIGR00132">
    <property type="entry name" value="gatA"/>
    <property type="match status" value="1"/>
</dbReference>
<dbReference type="PANTHER" id="PTHR11895:SF151">
    <property type="entry name" value="GLUTAMYL-TRNA(GLN) AMIDOTRANSFERASE SUBUNIT A"/>
    <property type="match status" value="1"/>
</dbReference>
<dbReference type="PANTHER" id="PTHR11895">
    <property type="entry name" value="TRANSAMIDASE"/>
    <property type="match status" value="1"/>
</dbReference>
<dbReference type="Pfam" id="PF01425">
    <property type="entry name" value="Amidase"/>
    <property type="match status" value="1"/>
</dbReference>
<dbReference type="SUPFAM" id="SSF75304">
    <property type="entry name" value="Amidase signature (AS) enzymes"/>
    <property type="match status" value="1"/>
</dbReference>
<dbReference type="PROSITE" id="PS00571">
    <property type="entry name" value="AMIDASES"/>
    <property type="match status" value="1"/>
</dbReference>